<protein>
    <recommendedName>
        <fullName>Chaperone protein DnaK</fullName>
    </recommendedName>
    <alternativeName>
        <fullName>HSP70</fullName>
    </alternativeName>
    <alternativeName>
        <fullName>Heat shock 70 kDa protein</fullName>
    </alternativeName>
    <alternativeName>
        <fullName>Heat shock protein 70</fullName>
    </alternativeName>
</protein>
<evidence type="ECO:0000250" key="1"/>
<evidence type="ECO:0000305" key="2"/>
<accession>P80692</accession>
<keyword id="KW-0067">ATP-binding</keyword>
<keyword id="KW-0143">Chaperone</keyword>
<keyword id="KW-0903">Direct protein sequencing</keyword>
<keyword id="KW-0547">Nucleotide-binding</keyword>
<keyword id="KW-0346">Stress response</keyword>
<feature type="chain" id="PRO_0000078498" description="Chaperone protein DnaK">
    <location>
        <begin position="1"/>
        <end position="17" status="greater than"/>
    </location>
</feature>
<feature type="non-terminal residue">
    <location>
        <position position="17"/>
    </location>
</feature>
<sequence length="17" mass="1679">ARAVGIDLGTTNXVXAV</sequence>
<dbReference type="GO" id="GO:0005524">
    <property type="term" value="F:ATP binding"/>
    <property type="evidence" value="ECO:0007669"/>
    <property type="project" value="UniProtKB-KW"/>
</dbReference>
<dbReference type="PROSITE" id="PS00297">
    <property type="entry name" value="HSP70_1"/>
    <property type="match status" value="1"/>
</dbReference>
<gene>
    <name type="primary">dnaK</name>
</gene>
<organism>
    <name type="scientific">Mycolicibacterium smegmatis</name>
    <name type="common">Mycobacterium smegmatis</name>
    <dbReference type="NCBI Taxonomy" id="1772"/>
    <lineage>
        <taxon>Bacteria</taxon>
        <taxon>Bacillati</taxon>
        <taxon>Actinomycetota</taxon>
        <taxon>Actinomycetes</taxon>
        <taxon>Mycobacteriales</taxon>
        <taxon>Mycobacteriaceae</taxon>
        <taxon>Mycolicibacterium</taxon>
    </lineage>
</organism>
<proteinExistence type="evidence at protein level"/>
<reference key="1">
    <citation type="journal article" date="1997" name="BioMetals">
        <title>Enhanced hydrogen peroxide sensitivity and altered stress protein expression in iron-starved Mycobacterium smegmatis.</title>
        <authorList>
            <person name="Lundrigan M.D."/>
            <person name="Arceneaux J.E.L."/>
            <person name="Zhu W."/>
            <person name="Byers B.R."/>
        </authorList>
    </citation>
    <scope>PROTEIN SEQUENCE</scope>
    <source>
        <strain>ATCC 607 / DSM 43465 / JCM 20379 / NBRC 3207 / NRRL B-692</strain>
    </source>
</reference>
<name>DNAK_MYCSM</name>
<comment type="function">
    <text evidence="1">Acts as a chaperone.</text>
</comment>
<comment type="induction">
    <text evidence="1">By stress conditions e.g. heat shock (By similarity).</text>
</comment>
<comment type="similarity">
    <text evidence="2">Belongs to the heat shock protein 70 family.</text>
</comment>